<name>HCAD_ECOSM</name>
<comment type="function">
    <text evidence="1">Part of the multicomponent 3-phenylpropionate dioxygenase, that converts 3-phenylpropionic acid (PP) and cinnamic acid (CI) into 3-phenylpropionate-dihydrodiol (PP-dihydrodiol) and cinnamic acid-dihydrodiol (CI-dihydrodiol), respectively.</text>
</comment>
<comment type="catalytic activity">
    <reaction evidence="1">
        <text>2 reduced [2Fe-2S]-[ferredoxin] + NAD(+) + H(+) = 2 oxidized [2Fe-2S]-[ferredoxin] + NADH</text>
        <dbReference type="Rhea" id="RHEA:16521"/>
        <dbReference type="Rhea" id="RHEA-COMP:10000"/>
        <dbReference type="Rhea" id="RHEA-COMP:10001"/>
        <dbReference type="ChEBI" id="CHEBI:15378"/>
        <dbReference type="ChEBI" id="CHEBI:33737"/>
        <dbReference type="ChEBI" id="CHEBI:33738"/>
        <dbReference type="ChEBI" id="CHEBI:57540"/>
        <dbReference type="ChEBI" id="CHEBI:57945"/>
        <dbReference type="EC" id="1.18.1.3"/>
    </reaction>
</comment>
<comment type="cofactor">
    <cofactor evidence="1">
        <name>FAD</name>
        <dbReference type="ChEBI" id="CHEBI:57692"/>
    </cofactor>
</comment>
<comment type="pathway">
    <text evidence="1">Aromatic compound metabolism; 3-phenylpropanoate degradation.</text>
</comment>
<comment type="subunit">
    <text evidence="1">This dioxygenase system consists of four proteins: the two subunits of the hydroxylase component (HcaE and HcaF), a ferredoxin (HcaC) and a ferredoxin reductase (HcaD).</text>
</comment>
<comment type="similarity">
    <text evidence="1">Belongs to the bacterial ring-hydroxylating dioxygenase ferredoxin reductase family.</text>
</comment>
<sequence length="400" mass="43799">MKEKTIIIVGGGQAAAMAAASLRQQGFTGELHLFSDEQHLPYERPPLSKSMLLEDSPQLQSVLPAHWWQENNVHLHSGVTIKTLGRDTRELVLANGESWHWDQLFIATGAAARPLPLLDALGERCFTLRHAGDAARLREVLQPERSVVIVGAGTIGLELAASATQRGCKVTVIELAATVMGRNAPPPVQHYLLQRHQQAGVRILLNNAIEHVVDGENVELTLQSGETLRADVVIYGIGISANDQLAREANLDTANGIVIDEACRTCDPAIFAGGDVAITRLDNGALHRCESWENANNQAQIAASAMLGLPLPRLPPPWFWSDQYSDNLQFIGDMHGDDWLCRGNPETQKAIWFNLQNGVLIGAVTLNQGREIRPIRKWIQSGKTFDAKLLTDEDIALKSL</sequence>
<evidence type="ECO:0000255" key="1">
    <source>
        <dbReference type="HAMAP-Rule" id="MF_01651"/>
    </source>
</evidence>
<keyword id="KW-0058">Aromatic hydrocarbons catabolism</keyword>
<keyword id="KW-0274">FAD</keyword>
<keyword id="KW-0285">Flavoprotein</keyword>
<keyword id="KW-0520">NAD</keyword>
<keyword id="KW-0560">Oxidoreductase</keyword>
<feature type="chain" id="PRO_1000186988" description="3-phenylpropionate/cinnamic acid dioxygenase ferredoxin--NAD(+) reductase component">
    <location>
        <begin position="1"/>
        <end position="400"/>
    </location>
</feature>
<feature type="binding site" evidence="1">
    <location>
        <begin position="5"/>
        <end position="36"/>
    </location>
    <ligand>
        <name>FAD</name>
        <dbReference type="ChEBI" id="CHEBI:57692"/>
    </ligand>
</feature>
<feature type="binding site" evidence="1">
    <location>
        <begin position="146"/>
        <end position="174"/>
    </location>
    <ligand>
        <name>NAD(+)</name>
        <dbReference type="ChEBI" id="CHEBI:57540"/>
    </ligand>
</feature>
<accession>B1LNJ8</accession>
<protein>
    <recommendedName>
        <fullName evidence="1">3-phenylpropionate/cinnamic acid dioxygenase ferredoxin--NAD(+) reductase component</fullName>
        <ecNumber evidence="1">1.18.1.3</ecNumber>
    </recommendedName>
</protein>
<reference key="1">
    <citation type="journal article" date="2008" name="J. Bacteriol.">
        <title>Insights into the environmental resistance gene pool from the genome sequence of the multidrug-resistant environmental isolate Escherichia coli SMS-3-5.</title>
        <authorList>
            <person name="Fricke W.F."/>
            <person name="Wright M.S."/>
            <person name="Lindell A.H."/>
            <person name="Harkins D.M."/>
            <person name="Baker-Austin C."/>
            <person name="Ravel J."/>
            <person name="Stepanauskas R."/>
        </authorList>
    </citation>
    <scope>NUCLEOTIDE SEQUENCE [LARGE SCALE GENOMIC DNA]</scope>
    <source>
        <strain>SMS-3-5 / SECEC</strain>
    </source>
</reference>
<gene>
    <name evidence="1" type="primary">hcaD</name>
    <name type="ordered locus">EcSMS35_2695</name>
</gene>
<dbReference type="EC" id="1.18.1.3" evidence="1"/>
<dbReference type="EMBL" id="CP000970">
    <property type="protein sequence ID" value="ACB19396.1"/>
    <property type="molecule type" value="Genomic_DNA"/>
</dbReference>
<dbReference type="RefSeq" id="WP_000660760.1">
    <property type="nucleotide sequence ID" value="NC_010498.1"/>
</dbReference>
<dbReference type="SMR" id="B1LNJ8"/>
<dbReference type="KEGG" id="ecm:EcSMS35_2695"/>
<dbReference type="HOGENOM" id="CLU_003291_4_0_6"/>
<dbReference type="UniPathway" id="UPA00714"/>
<dbReference type="Proteomes" id="UP000007011">
    <property type="component" value="Chromosome"/>
</dbReference>
<dbReference type="GO" id="GO:0005737">
    <property type="term" value="C:cytoplasm"/>
    <property type="evidence" value="ECO:0007669"/>
    <property type="project" value="TreeGrafter"/>
</dbReference>
<dbReference type="GO" id="GO:0008695">
    <property type="term" value="F:3-phenylpropionate dioxygenase activity"/>
    <property type="evidence" value="ECO:0007669"/>
    <property type="project" value="UniProtKB-UniRule"/>
</dbReference>
<dbReference type="GO" id="GO:0008860">
    <property type="term" value="F:ferredoxin-NAD+ reductase activity"/>
    <property type="evidence" value="ECO:0007669"/>
    <property type="project" value="UniProtKB-EC"/>
</dbReference>
<dbReference type="GO" id="GO:0016651">
    <property type="term" value="F:oxidoreductase activity, acting on NAD(P)H"/>
    <property type="evidence" value="ECO:0007669"/>
    <property type="project" value="TreeGrafter"/>
</dbReference>
<dbReference type="GO" id="GO:0019380">
    <property type="term" value="P:3-phenylpropionate catabolic process"/>
    <property type="evidence" value="ECO:0007669"/>
    <property type="project" value="UniProtKB-UniRule"/>
</dbReference>
<dbReference type="FunFam" id="3.30.390.30:FF:000010">
    <property type="entry name" value="3-phenylpropionate/cinnamic acid dioxygenase ferredoxin--NAD(+) reductase component"/>
    <property type="match status" value="1"/>
</dbReference>
<dbReference type="FunFam" id="3.50.50.60:FF:000088">
    <property type="entry name" value="3-phenylpropionate/cinnamic acid dioxygenase ferredoxin--NAD(+) reductase component"/>
    <property type="match status" value="1"/>
</dbReference>
<dbReference type="Gene3D" id="3.30.390.30">
    <property type="match status" value="1"/>
</dbReference>
<dbReference type="Gene3D" id="3.50.50.60">
    <property type="entry name" value="FAD/NAD(P)-binding domain"/>
    <property type="match status" value="2"/>
</dbReference>
<dbReference type="HAMAP" id="MF_01651">
    <property type="entry name" value="HcaD"/>
    <property type="match status" value="1"/>
</dbReference>
<dbReference type="InterPro" id="IPR050446">
    <property type="entry name" value="FAD-oxidoreductase/Apoptosis"/>
</dbReference>
<dbReference type="InterPro" id="IPR036188">
    <property type="entry name" value="FAD/NAD-bd_sf"/>
</dbReference>
<dbReference type="InterPro" id="IPR023753">
    <property type="entry name" value="FAD/NAD-binding_dom"/>
</dbReference>
<dbReference type="InterPro" id="IPR016156">
    <property type="entry name" value="FAD/NAD-linked_Rdtase_dimer_sf"/>
</dbReference>
<dbReference type="InterPro" id="IPR023744">
    <property type="entry name" value="HcaD"/>
</dbReference>
<dbReference type="InterPro" id="IPR028202">
    <property type="entry name" value="Reductase_C"/>
</dbReference>
<dbReference type="InterPro" id="IPR053382">
    <property type="entry name" value="Ring-hydroxylating_dioxygenase"/>
</dbReference>
<dbReference type="NCBIfam" id="NF042949">
    <property type="entry name" value="3PPDioc_HcaD"/>
    <property type="match status" value="1"/>
</dbReference>
<dbReference type="NCBIfam" id="NF007286">
    <property type="entry name" value="PRK09754.1"/>
    <property type="match status" value="1"/>
</dbReference>
<dbReference type="PANTHER" id="PTHR43557">
    <property type="entry name" value="APOPTOSIS-INDUCING FACTOR 1"/>
    <property type="match status" value="1"/>
</dbReference>
<dbReference type="PANTHER" id="PTHR43557:SF2">
    <property type="entry name" value="RIESKE DOMAIN-CONTAINING PROTEIN-RELATED"/>
    <property type="match status" value="1"/>
</dbReference>
<dbReference type="Pfam" id="PF07992">
    <property type="entry name" value="Pyr_redox_2"/>
    <property type="match status" value="1"/>
</dbReference>
<dbReference type="Pfam" id="PF14759">
    <property type="entry name" value="Reductase_C"/>
    <property type="match status" value="1"/>
</dbReference>
<dbReference type="PRINTS" id="PR00368">
    <property type="entry name" value="FADPNR"/>
</dbReference>
<dbReference type="PRINTS" id="PR00411">
    <property type="entry name" value="PNDRDTASEI"/>
</dbReference>
<dbReference type="SUPFAM" id="SSF51905">
    <property type="entry name" value="FAD/NAD(P)-binding domain"/>
    <property type="match status" value="1"/>
</dbReference>
<dbReference type="SUPFAM" id="SSF55424">
    <property type="entry name" value="FAD/NAD-linked reductases, dimerisation (C-terminal) domain"/>
    <property type="match status" value="1"/>
</dbReference>
<organism>
    <name type="scientific">Escherichia coli (strain SMS-3-5 / SECEC)</name>
    <dbReference type="NCBI Taxonomy" id="439855"/>
    <lineage>
        <taxon>Bacteria</taxon>
        <taxon>Pseudomonadati</taxon>
        <taxon>Pseudomonadota</taxon>
        <taxon>Gammaproteobacteria</taxon>
        <taxon>Enterobacterales</taxon>
        <taxon>Enterobacteriaceae</taxon>
        <taxon>Escherichia</taxon>
    </lineage>
</organism>
<proteinExistence type="inferred from homology"/>